<organism>
    <name type="scientific">Vibrio cholerae serotype O1 (strain ATCC 39315 / El Tor Inaba N16961)</name>
    <dbReference type="NCBI Taxonomy" id="243277"/>
    <lineage>
        <taxon>Bacteria</taxon>
        <taxon>Pseudomonadati</taxon>
        <taxon>Pseudomonadota</taxon>
        <taxon>Gammaproteobacteria</taxon>
        <taxon>Vibrionales</taxon>
        <taxon>Vibrionaceae</taxon>
        <taxon>Vibrio</taxon>
    </lineage>
</organism>
<dbReference type="EMBL" id="AE003853">
    <property type="protein sequence ID" value="AAF96216.1"/>
    <property type="molecule type" value="Genomic_DNA"/>
</dbReference>
<dbReference type="PIR" id="F82473">
    <property type="entry name" value="F82473"/>
</dbReference>
<dbReference type="RefSeq" id="NP_232704.1">
    <property type="nucleotide sequence ID" value="NC_002506.1"/>
</dbReference>
<dbReference type="RefSeq" id="WP_000272282.1">
    <property type="nucleotide sequence ID" value="NZ_LT906615.1"/>
</dbReference>
<dbReference type="SMR" id="Q9KMM3"/>
<dbReference type="STRING" id="243277.VC_A0308"/>
<dbReference type="DNASU" id="2611913"/>
<dbReference type="EnsemblBacteria" id="AAF96216">
    <property type="protein sequence ID" value="AAF96216"/>
    <property type="gene ID" value="VC_A0308"/>
</dbReference>
<dbReference type="KEGG" id="vch:VC_A0308"/>
<dbReference type="PATRIC" id="fig|243277.26.peg.2944"/>
<dbReference type="eggNOG" id="COG0232">
    <property type="taxonomic scope" value="Bacteria"/>
</dbReference>
<dbReference type="HOGENOM" id="CLU_028163_0_0_6"/>
<dbReference type="Proteomes" id="UP000000584">
    <property type="component" value="Chromosome 2"/>
</dbReference>
<dbReference type="GO" id="GO:0008832">
    <property type="term" value="F:dGTPase activity"/>
    <property type="evidence" value="ECO:0000318"/>
    <property type="project" value="GO_Central"/>
</dbReference>
<dbReference type="GO" id="GO:0006203">
    <property type="term" value="P:dGTP catabolic process"/>
    <property type="evidence" value="ECO:0000318"/>
    <property type="project" value="GO_Central"/>
</dbReference>
<dbReference type="CDD" id="cd00077">
    <property type="entry name" value="HDc"/>
    <property type="match status" value="1"/>
</dbReference>
<dbReference type="Gene3D" id="1.10.3210.10">
    <property type="entry name" value="Hypothetical protein af1432"/>
    <property type="match status" value="1"/>
</dbReference>
<dbReference type="HAMAP" id="MF_01212">
    <property type="entry name" value="dGTPase_type2"/>
    <property type="match status" value="1"/>
</dbReference>
<dbReference type="InterPro" id="IPR006261">
    <property type="entry name" value="dGTPase"/>
</dbReference>
<dbReference type="InterPro" id="IPR050135">
    <property type="entry name" value="dGTPase-like"/>
</dbReference>
<dbReference type="InterPro" id="IPR023023">
    <property type="entry name" value="dNTPase_2"/>
</dbReference>
<dbReference type="InterPro" id="IPR003607">
    <property type="entry name" value="HD/PDEase_dom"/>
</dbReference>
<dbReference type="InterPro" id="IPR006674">
    <property type="entry name" value="HD_domain"/>
</dbReference>
<dbReference type="InterPro" id="IPR026875">
    <property type="entry name" value="PHydrolase_assoc_dom"/>
</dbReference>
<dbReference type="NCBIfam" id="TIGR01353">
    <property type="entry name" value="dGTP_triPase"/>
    <property type="match status" value="1"/>
</dbReference>
<dbReference type="PANTHER" id="PTHR11373:SF40">
    <property type="entry name" value="DEOXYGUANOSINETRIPHOSPHATE TRIPHOSPHOHYDROLASE-LIKE PROTEIN 2"/>
    <property type="match status" value="1"/>
</dbReference>
<dbReference type="PANTHER" id="PTHR11373">
    <property type="entry name" value="DEOXYNUCLEOSIDE TRIPHOSPHATE TRIPHOSPHOHYDROLASE"/>
    <property type="match status" value="1"/>
</dbReference>
<dbReference type="Pfam" id="PF01966">
    <property type="entry name" value="HD"/>
    <property type="match status" value="1"/>
</dbReference>
<dbReference type="Pfam" id="PF13286">
    <property type="entry name" value="HD_assoc"/>
    <property type="match status" value="1"/>
</dbReference>
<dbReference type="SMART" id="SM00471">
    <property type="entry name" value="HDc"/>
    <property type="match status" value="1"/>
</dbReference>
<dbReference type="SUPFAM" id="SSF109604">
    <property type="entry name" value="HD-domain/PDEase-like"/>
    <property type="match status" value="1"/>
</dbReference>
<dbReference type="PROSITE" id="PS51831">
    <property type="entry name" value="HD"/>
    <property type="match status" value="1"/>
</dbReference>
<gene>
    <name type="ordered locus">VC_A0308</name>
</gene>
<reference key="1">
    <citation type="journal article" date="2000" name="Nature">
        <title>DNA sequence of both chromosomes of the cholera pathogen Vibrio cholerae.</title>
        <authorList>
            <person name="Heidelberg J.F."/>
            <person name="Eisen J.A."/>
            <person name="Nelson W.C."/>
            <person name="Clayton R.A."/>
            <person name="Gwinn M.L."/>
            <person name="Dodson R.J."/>
            <person name="Haft D.H."/>
            <person name="Hickey E.K."/>
            <person name="Peterson J.D."/>
            <person name="Umayam L.A."/>
            <person name="Gill S.R."/>
            <person name="Nelson K.E."/>
            <person name="Read T.D."/>
            <person name="Tettelin H."/>
            <person name="Richardson D.L."/>
            <person name="Ermolaeva M.D."/>
            <person name="Vamathevan J.J."/>
            <person name="Bass S."/>
            <person name="Qin H."/>
            <person name="Dragoi I."/>
            <person name="Sellers P."/>
            <person name="McDonald L.A."/>
            <person name="Utterback T.R."/>
            <person name="Fleischmann R.D."/>
            <person name="Nierman W.C."/>
            <person name="White O."/>
            <person name="Salzberg S.L."/>
            <person name="Smith H.O."/>
            <person name="Colwell R.R."/>
            <person name="Mekalanos J.J."/>
            <person name="Venter J.C."/>
            <person name="Fraser C.M."/>
        </authorList>
    </citation>
    <scope>NUCLEOTIDE SEQUENCE [LARGE SCALE GENOMIC DNA]</scope>
    <source>
        <strain>ATCC 39315 / El Tor Inaba N16961</strain>
    </source>
</reference>
<keyword id="KW-0378">Hydrolase</keyword>
<keyword id="KW-1185">Reference proteome</keyword>
<proteinExistence type="inferred from homology"/>
<comment type="similarity">
    <text evidence="1">Belongs to the dGTPase family. Type 2 subfamily.</text>
</comment>
<name>DGT1B_VIBCH</name>
<sequence>MYDSEVIEYAKEQENIISKLEYRVYKHDDGRSVNRQDLMRDYARVLYSSSFRRLQGKMQLLGVDASKFNRNRLTHSLEVAQIARSIAYDLELNHTVVAETASLAHDIGNPPFGHYGEVVLNDLSLACGGYEGNAQAFRILRTLEKKHYAYPGLNLNVRTLMAITKYFFNKHQNNKKFLYDADYEFLKTELDSKGVTVTKSIDAEIMDLADEIAYAAHDLEDALSFGMISLGEIVHEFSISDKFKDAYPTMTDIAKEAQNVAMKASRSGTSEEYAIVLKKELTSMIVNILCSDIGLVDGCLGYKRHAKLAEGLKKLLFKAILRKKDIQLYERRGEQIIRGLFEVYSDEKYNKDNMLLPPELRAINDCKTRLVTDYISGMMDSYAAQEYEKYFGKGSADKLYFK</sequence>
<evidence type="ECO:0000255" key="1">
    <source>
        <dbReference type="HAMAP-Rule" id="MF_01212"/>
    </source>
</evidence>
<evidence type="ECO:0000255" key="2">
    <source>
        <dbReference type="PROSITE-ProRule" id="PRU01175"/>
    </source>
</evidence>
<feature type="chain" id="PRO_0000205327" description="Deoxyguanosinetriphosphate triphosphohydrolase-like protein 2">
    <location>
        <begin position="1"/>
        <end position="402"/>
    </location>
</feature>
<feature type="domain" description="HD" evidence="2">
    <location>
        <begin position="72"/>
        <end position="215"/>
    </location>
</feature>
<protein>
    <recommendedName>
        <fullName evidence="1">Deoxyguanosinetriphosphate triphosphohydrolase-like protein 2</fullName>
    </recommendedName>
</protein>
<accession>Q9KMM3</accession>